<keyword id="KW-1185">Reference proteome</keyword>
<keyword id="KW-0687">Ribonucleoprotein</keyword>
<keyword id="KW-0689">Ribosomal protein</keyword>
<proteinExistence type="inferred from homology"/>
<gene>
    <name evidence="1" type="primary">rpl30e</name>
    <name type="ordered locus">Mpal_2163</name>
</gene>
<accession>B8GDW0</accession>
<dbReference type="EMBL" id="CP001338">
    <property type="protein sequence ID" value="ACL17461.1"/>
    <property type="molecule type" value="Genomic_DNA"/>
</dbReference>
<dbReference type="RefSeq" id="WP_012618780.1">
    <property type="nucleotide sequence ID" value="NC_011832.1"/>
</dbReference>
<dbReference type="SMR" id="B8GDW0"/>
<dbReference type="STRING" id="521011.Mpal_2163"/>
<dbReference type="GeneID" id="7270248"/>
<dbReference type="KEGG" id="mpl:Mpal_2163"/>
<dbReference type="eggNOG" id="arCOG01752">
    <property type="taxonomic scope" value="Archaea"/>
</dbReference>
<dbReference type="HOGENOM" id="CLU_130502_1_1_2"/>
<dbReference type="OrthoDB" id="10759at2157"/>
<dbReference type="Proteomes" id="UP000002457">
    <property type="component" value="Chromosome"/>
</dbReference>
<dbReference type="GO" id="GO:0022625">
    <property type="term" value="C:cytosolic large ribosomal subunit"/>
    <property type="evidence" value="ECO:0007669"/>
    <property type="project" value="InterPro"/>
</dbReference>
<dbReference type="GO" id="GO:0003723">
    <property type="term" value="F:RNA binding"/>
    <property type="evidence" value="ECO:0007669"/>
    <property type="project" value="InterPro"/>
</dbReference>
<dbReference type="GO" id="GO:0003735">
    <property type="term" value="F:structural constituent of ribosome"/>
    <property type="evidence" value="ECO:0007669"/>
    <property type="project" value="InterPro"/>
</dbReference>
<dbReference type="GO" id="GO:0006412">
    <property type="term" value="P:translation"/>
    <property type="evidence" value="ECO:0007669"/>
    <property type="project" value="UniProtKB-UniRule"/>
</dbReference>
<dbReference type="Gene3D" id="3.30.1330.30">
    <property type="match status" value="1"/>
</dbReference>
<dbReference type="HAMAP" id="MF_00481">
    <property type="entry name" value="Ribosomal_eL30"/>
    <property type="match status" value="1"/>
</dbReference>
<dbReference type="InterPro" id="IPR000231">
    <property type="entry name" value="Ribosomal_eL30"/>
</dbReference>
<dbReference type="InterPro" id="IPR039109">
    <property type="entry name" value="Ribosomal_eL30-like"/>
</dbReference>
<dbReference type="InterPro" id="IPR029064">
    <property type="entry name" value="Ribosomal_eL30-like_sf"/>
</dbReference>
<dbReference type="InterPro" id="IPR004038">
    <property type="entry name" value="Ribosomal_eL8/eL30/eS12/Gad45"/>
</dbReference>
<dbReference type="NCBIfam" id="NF002172">
    <property type="entry name" value="PRK01018.1"/>
    <property type="match status" value="1"/>
</dbReference>
<dbReference type="PANTHER" id="PTHR11449">
    <property type="entry name" value="RIBOSOMAL PROTEIN L30"/>
    <property type="match status" value="1"/>
</dbReference>
<dbReference type="Pfam" id="PF01248">
    <property type="entry name" value="Ribosomal_L7Ae"/>
    <property type="match status" value="1"/>
</dbReference>
<dbReference type="SUPFAM" id="SSF55315">
    <property type="entry name" value="L30e-like"/>
    <property type="match status" value="1"/>
</dbReference>
<reference key="1">
    <citation type="journal article" date="2015" name="Genome Announc.">
        <title>Complete Genome Sequence of Methanosphaerula palustris E1-9CT, a Hydrogenotrophic Methanogen Isolated from a Minerotrophic Fen Peatland.</title>
        <authorList>
            <person name="Cadillo-Quiroz H."/>
            <person name="Browne P."/>
            <person name="Kyrpides N."/>
            <person name="Woyke T."/>
            <person name="Goodwin L."/>
            <person name="Detter C."/>
            <person name="Yavitt J.B."/>
            <person name="Zinder S.H."/>
        </authorList>
    </citation>
    <scope>NUCLEOTIDE SEQUENCE [LARGE SCALE GENOMIC DNA]</scope>
    <source>
        <strain>ATCC BAA-1556 / DSM 19958 / E1-9c</strain>
    </source>
</reference>
<protein>
    <recommendedName>
        <fullName evidence="1">Large ribosomal subunit protein eL30</fullName>
    </recommendedName>
    <alternativeName>
        <fullName evidence="2">50S ribosomal protein L30e</fullName>
    </alternativeName>
</protein>
<name>RL30E_METPE</name>
<sequence length="96" mass="10303">MDFNASLRKAIKTGDVLLGQNSTAECIKDGKAQMIVVAANCPSTYRTMLDEQNDVYVHTYEGSSMQLGKACGKPFMVSALAIVNAGESDIISLKRA</sequence>
<organism>
    <name type="scientific">Methanosphaerula palustris (strain ATCC BAA-1556 / DSM 19958 / E1-9c)</name>
    <dbReference type="NCBI Taxonomy" id="521011"/>
    <lineage>
        <taxon>Archaea</taxon>
        <taxon>Methanobacteriati</taxon>
        <taxon>Methanobacteriota</taxon>
        <taxon>Stenosarchaea group</taxon>
        <taxon>Methanomicrobia</taxon>
        <taxon>Methanomicrobiales</taxon>
        <taxon>Methanoregulaceae</taxon>
        <taxon>Methanosphaerula</taxon>
    </lineage>
</organism>
<evidence type="ECO:0000255" key="1">
    <source>
        <dbReference type="HAMAP-Rule" id="MF_00481"/>
    </source>
</evidence>
<evidence type="ECO:0000305" key="2"/>
<comment type="similarity">
    <text evidence="1">Belongs to the eukaryotic ribosomal protein eL30 family.</text>
</comment>
<feature type="chain" id="PRO_1000135637" description="Large ribosomal subunit protein eL30">
    <location>
        <begin position="1"/>
        <end position="96"/>
    </location>
</feature>